<gene>
    <name evidence="1" type="primary">yidC</name>
    <name type="ordered locus">CT0006</name>
</gene>
<comment type="function">
    <text evidence="1">Required for the insertion and/or proper folding and/or complex formation of integral membrane proteins into the membrane. Involved in integration of membrane proteins that insert both dependently and independently of the Sec translocase complex, as well as at least some lipoproteins. Aids folding of multispanning membrane proteins.</text>
</comment>
<comment type="subunit">
    <text evidence="1">Interacts with the Sec translocase complex via SecD. Specifically interacts with transmembrane segments of nascent integral membrane proteins during membrane integration.</text>
</comment>
<comment type="subcellular location">
    <subcellularLocation>
        <location evidence="1">Cell inner membrane</location>
        <topology evidence="1">Multi-pass membrane protein</topology>
    </subcellularLocation>
</comment>
<comment type="similarity">
    <text evidence="1">Belongs to the OXA1/ALB3/YidC family. Type 1 subfamily.</text>
</comment>
<name>YIDC_CHLTE</name>
<proteinExistence type="inferred from homology"/>
<evidence type="ECO:0000255" key="1">
    <source>
        <dbReference type="HAMAP-Rule" id="MF_01810"/>
    </source>
</evidence>
<feature type="chain" id="PRO_0000124706" description="Membrane protein insertase YidC">
    <location>
        <begin position="1"/>
        <end position="590"/>
    </location>
</feature>
<feature type="transmembrane region" description="Helical" evidence="1">
    <location>
        <begin position="5"/>
        <end position="25"/>
    </location>
</feature>
<feature type="transmembrane region" description="Helical" evidence="1">
    <location>
        <begin position="368"/>
        <end position="388"/>
    </location>
</feature>
<feature type="transmembrane region" description="Helical" evidence="1">
    <location>
        <begin position="433"/>
        <end position="453"/>
    </location>
</feature>
<feature type="transmembrane region" description="Helical" evidence="1">
    <location>
        <begin position="483"/>
        <end position="503"/>
    </location>
</feature>
<feature type="transmembrane region" description="Helical" evidence="1">
    <location>
        <begin position="519"/>
        <end position="539"/>
    </location>
</feature>
<dbReference type="EMBL" id="AE006470">
    <property type="protein sequence ID" value="AAM71254.1"/>
    <property type="molecule type" value="Genomic_DNA"/>
</dbReference>
<dbReference type="RefSeq" id="NP_660912.1">
    <property type="nucleotide sequence ID" value="NC_002932.3"/>
</dbReference>
<dbReference type="RefSeq" id="WP_010931700.1">
    <property type="nucleotide sequence ID" value="NC_002932.3"/>
</dbReference>
<dbReference type="SMR" id="Q8KGG2"/>
<dbReference type="STRING" id="194439.CT0006"/>
<dbReference type="EnsemblBacteria" id="AAM71254">
    <property type="protein sequence ID" value="AAM71254"/>
    <property type="gene ID" value="CT0006"/>
</dbReference>
<dbReference type="KEGG" id="cte:CT0006"/>
<dbReference type="PATRIC" id="fig|194439.7.peg.6"/>
<dbReference type="eggNOG" id="COG0706">
    <property type="taxonomic scope" value="Bacteria"/>
</dbReference>
<dbReference type="HOGENOM" id="CLU_016535_2_0_10"/>
<dbReference type="OrthoDB" id="9780552at2"/>
<dbReference type="Proteomes" id="UP000001007">
    <property type="component" value="Chromosome"/>
</dbReference>
<dbReference type="GO" id="GO:0005886">
    <property type="term" value="C:plasma membrane"/>
    <property type="evidence" value="ECO:0007669"/>
    <property type="project" value="UniProtKB-SubCell"/>
</dbReference>
<dbReference type="GO" id="GO:0032977">
    <property type="term" value="F:membrane insertase activity"/>
    <property type="evidence" value="ECO:0007669"/>
    <property type="project" value="InterPro"/>
</dbReference>
<dbReference type="GO" id="GO:0051205">
    <property type="term" value="P:protein insertion into membrane"/>
    <property type="evidence" value="ECO:0007669"/>
    <property type="project" value="TreeGrafter"/>
</dbReference>
<dbReference type="GO" id="GO:0015031">
    <property type="term" value="P:protein transport"/>
    <property type="evidence" value="ECO:0007669"/>
    <property type="project" value="UniProtKB-KW"/>
</dbReference>
<dbReference type="CDD" id="cd20070">
    <property type="entry name" value="5TM_YidC_Alb3"/>
    <property type="match status" value="1"/>
</dbReference>
<dbReference type="CDD" id="cd19961">
    <property type="entry name" value="EcYidC-like_peri"/>
    <property type="match status" value="1"/>
</dbReference>
<dbReference type="Gene3D" id="2.70.98.90">
    <property type="match status" value="1"/>
</dbReference>
<dbReference type="HAMAP" id="MF_01810">
    <property type="entry name" value="YidC_type1"/>
    <property type="match status" value="1"/>
</dbReference>
<dbReference type="InterPro" id="IPR019998">
    <property type="entry name" value="Membr_insert_YidC"/>
</dbReference>
<dbReference type="InterPro" id="IPR028053">
    <property type="entry name" value="Membr_insert_YidC_N"/>
</dbReference>
<dbReference type="InterPro" id="IPR001708">
    <property type="entry name" value="YidC/ALB3/OXA1/COX18"/>
</dbReference>
<dbReference type="InterPro" id="IPR028055">
    <property type="entry name" value="YidC/Oxa/ALB_C"/>
</dbReference>
<dbReference type="InterPro" id="IPR047196">
    <property type="entry name" value="YidC_ALB_C"/>
</dbReference>
<dbReference type="InterPro" id="IPR038221">
    <property type="entry name" value="YidC_periplasmic_sf"/>
</dbReference>
<dbReference type="NCBIfam" id="TIGR03593">
    <property type="entry name" value="yidC_nterm"/>
    <property type="match status" value="1"/>
</dbReference>
<dbReference type="NCBIfam" id="TIGR03592">
    <property type="entry name" value="yidC_oxa1_cterm"/>
    <property type="match status" value="1"/>
</dbReference>
<dbReference type="PANTHER" id="PTHR12428:SF65">
    <property type="entry name" value="CYTOCHROME C OXIDASE ASSEMBLY PROTEIN COX18, MITOCHONDRIAL"/>
    <property type="match status" value="1"/>
</dbReference>
<dbReference type="PANTHER" id="PTHR12428">
    <property type="entry name" value="OXA1"/>
    <property type="match status" value="1"/>
</dbReference>
<dbReference type="Pfam" id="PF02096">
    <property type="entry name" value="60KD_IMP"/>
    <property type="match status" value="1"/>
</dbReference>
<dbReference type="Pfam" id="PF14849">
    <property type="entry name" value="YidC_periplas"/>
    <property type="match status" value="1"/>
</dbReference>
<dbReference type="PRINTS" id="PR00701">
    <property type="entry name" value="60KDINNERMP"/>
</dbReference>
<dbReference type="PRINTS" id="PR01900">
    <property type="entry name" value="YIDCPROTEIN"/>
</dbReference>
<accession>Q8KGG2</accession>
<organism>
    <name type="scientific">Chlorobaculum tepidum (strain ATCC 49652 / DSM 12025 / NBRC 103806 / TLS)</name>
    <name type="common">Chlorobium tepidum</name>
    <dbReference type="NCBI Taxonomy" id="194439"/>
    <lineage>
        <taxon>Bacteria</taxon>
        <taxon>Pseudomonadati</taxon>
        <taxon>Chlorobiota</taxon>
        <taxon>Chlorobiia</taxon>
        <taxon>Chlorobiales</taxon>
        <taxon>Chlorobiaceae</taxon>
        <taxon>Chlorobaculum</taxon>
    </lineage>
</organism>
<reference key="1">
    <citation type="journal article" date="2002" name="Proc. Natl. Acad. Sci. U.S.A.">
        <title>The complete genome sequence of Chlorobium tepidum TLS, a photosynthetic, anaerobic, green-sulfur bacterium.</title>
        <authorList>
            <person name="Eisen J.A."/>
            <person name="Nelson K.E."/>
            <person name="Paulsen I.T."/>
            <person name="Heidelberg J.F."/>
            <person name="Wu M."/>
            <person name="Dodson R.J."/>
            <person name="DeBoy R.T."/>
            <person name="Gwinn M.L."/>
            <person name="Nelson W.C."/>
            <person name="Haft D.H."/>
            <person name="Hickey E.K."/>
            <person name="Peterson J.D."/>
            <person name="Durkin A.S."/>
            <person name="Kolonay J.F."/>
            <person name="Yang F."/>
            <person name="Holt I.E."/>
            <person name="Umayam L.A."/>
            <person name="Mason T.M."/>
            <person name="Brenner M."/>
            <person name="Shea T.P."/>
            <person name="Parksey D.S."/>
            <person name="Nierman W.C."/>
            <person name="Feldblyum T.V."/>
            <person name="Hansen C.L."/>
            <person name="Craven M.B."/>
            <person name="Radune D."/>
            <person name="Vamathevan J.J."/>
            <person name="Khouri H.M."/>
            <person name="White O."/>
            <person name="Gruber T.M."/>
            <person name="Ketchum K.A."/>
            <person name="Venter J.C."/>
            <person name="Tettelin H."/>
            <person name="Bryant D.A."/>
            <person name="Fraser C.M."/>
        </authorList>
    </citation>
    <scope>NUCLEOTIDE SEQUENCE [LARGE SCALE GENOMIC DNA]</scope>
    <source>
        <strain>ATCC 49652 / DSM 12025 / NBRC 103806 / TLS</strain>
    </source>
</reference>
<sequence>MDRNSVIGFALIAAIMIVWLQFMKPEQKLGLEKAAASREAVQKTPAAALPAPSAAVAAAARADSLGSFAQASVGTEKTITVSNDLFTATLSSKGATLKSLVLKKHLDGNRKPFNLISASDKGALSMLFLSSDGKKIDTRDLYFRSLDAKTTETVTGKEKLSVSYVLDVDATRSIQITYTFTGDSYVVDYDLKLNGFGSSIAGNEYQLDWDGGLNYSEKDQVDESHNAIASAYLGGSVVKLDAKDAKKTWQDEESGKAQWVAVRNKYFVAAIMPQRTTDGIYLHGTKKDGSDFKNYVAALKMSFPAGQQSVDDHYRLYVGPLDYNTVKSLNADLEKIMDFGWDWLTRPFAEYLILPIFNWMNKYVTNYGLIIIIFAFLIKLVTWPLSLASTKSMKKMSALQPVMKELQEKYKDNPAKLQSELGRIYKEAGVNPLGGCLPTVIQMPLLFAMFYVFRSSIQLRQHGFLWVKDLSVPDSVYHFAFKLPLYGDHIAIMPILMAVTVFFQQKITPNAQSNEQTKIMMWLFPAMMLFFFNNMPAGLALYYLMFNIFSVAQQAYMNATITDEEKAAAAMQVAAATKPAQSAKKGGKKK</sequence>
<protein>
    <recommendedName>
        <fullName evidence="1">Membrane protein insertase YidC</fullName>
    </recommendedName>
    <alternativeName>
        <fullName evidence="1">Foldase YidC</fullName>
    </alternativeName>
    <alternativeName>
        <fullName evidence="1">Membrane integrase YidC</fullName>
    </alternativeName>
    <alternativeName>
        <fullName evidence="1">Membrane protein YidC</fullName>
    </alternativeName>
</protein>
<keyword id="KW-0997">Cell inner membrane</keyword>
<keyword id="KW-1003">Cell membrane</keyword>
<keyword id="KW-0143">Chaperone</keyword>
<keyword id="KW-0472">Membrane</keyword>
<keyword id="KW-0653">Protein transport</keyword>
<keyword id="KW-1185">Reference proteome</keyword>
<keyword id="KW-0812">Transmembrane</keyword>
<keyword id="KW-1133">Transmembrane helix</keyword>
<keyword id="KW-0813">Transport</keyword>